<name>GR66A_DROME</name>
<keyword id="KW-1003">Cell membrane</keyword>
<keyword id="KW-0325">Glycoprotein</keyword>
<keyword id="KW-0472">Membrane</keyword>
<keyword id="KW-0675">Receptor</keyword>
<keyword id="KW-1185">Reference proteome</keyword>
<keyword id="KW-0807">Transducer</keyword>
<keyword id="KW-0812">Transmembrane</keyword>
<keyword id="KW-1133">Transmembrane helix</keyword>
<protein>
    <recommendedName>
        <fullName>Gustatory receptor for bitter taste 66a</fullName>
    </recommendedName>
</protein>
<comment type="function">
    <text evidence="4 5 6 7 8 9 11 12">Gustatory receptor required for response to the bitter in taste neurons. Gr66a cells respond to bitter compounds such as caffeine, theophylline, threonine or valine. Flies avoid bitter substances, suggesting that Gr66a neuron activity is sufficient to mediate avoidance behavior. Required for sensing and avoiding N,N-Diethyl-meta-toluamide (DEET), the most widely used insect repellent worldwide, as well as to L-canavanine, a plant-derived insecticide. Gr66a neurons are also involved in the sex-specific perception of molecules inducing male avoidance behavior, probably through sensing 7-tricosene (7-T), a male cuticular pheromone and leading to inhibition of male-male courtship. Finally, also plays a role in oviposition behavior, in which females evaluate their environment and choose to lay eggs on substrates they may find aversive in other contexts.</text>
</comment>
<comment type="subcellular location">
    <subcellularLocation>
        <location evidence="1">Cell membrane</location>
        <topology evidence="1">Multi-pass membrane protein</topology>
    </subcellularLocation>
</comment>
<comment type="tissue specificity">
    <text evidence="3 4 5 6 10">Taste hairs in labial palps, labral and cibarial sense organs and forelegs. In larvae, is expressed in neurons of the terminal external chemosensory organ, as well as in the dorsal, ventral, and posterior pharyngeal sense organs.</text>
</comment>
<comment type="disruption phenotype">
    <text evidence="6 7 9 11">Disrupts fly aversion to caffeine, N,N-Diethyl-meta-toluamide (DEET), and L-canavanine.</text>
</comment>
<comment type="similarity">
    <text evidence="13">Belongs to the insect chemoreceptor superfamily. Gustatory receptor (GR) family. Gr66a subfamily.</text>
</comment>
<dbReference type="EMBL" id="AE014296">
    <property type="protein sequence ID" value="AAF50447.3"/>
    <property type="molecule type" value="Genomic_DNA"/>
</dbReference>
<dbReference type="RefSeq" id="NP_523971.3">
    <property type="nucleotide sequence ID" value="NM_079247.3"/>
</dbReference>
<dbReference type="SMR" id="Q9VSH2"/>
<dbReference type="FunCoup" id="Q9VSH2">
    <property type="interactions" value="25"/>
</dbReference>
<dbReference type="STRING" id="7227.FBpp0289508"/>
<dbReference type="TCDB" id="1.A.69.3.9">
    <property type="family name" value="the heteromeric odorant receptor channel (horc) family"/>
</dbReference>
<dbReference type="GlyCosmos" id="Q9VSH2">
    <property type="glycosylation" value="2 sites, No reported glycans"/>
</dbReference>
<dbReference type="GlyGen" id="Q9VSH2">
    <property type="glycosylation" value="2 sites"/>
</dbReference>
<dbReference type="PaxDb" id="7227-FBpp0289508"/>
<dbReference type="EnsemblMetazoa" id="FBtr0300280">
    <property type="protein sequence ID" value="FBpp0289508"/>
    <property type="gene ID" value="FBgn0035870"/>
</dbReference>
<dbReference type="GeneID" id="38935"/>
<dbReference type="KEGG" id="dme:Dmel_CG7189"/>
<dbReference type="AGR" id="FB:FBgn0035870"/>
<dbReference type="CTD" id="38935"/>
<dbReference type="FlyBase" id="FBgn0035870">
    <property type="gene designation" value="Gr66a"/>
</dbReference>
<dbReference type="VEuPathDB" id="VectorBase:FBgn0035870"/>
<dbReference type="eggNOG" id="ENOG502S2QD">
    <property type="taxonomic scope" value="Eukaryota"/>
</dbReference>
<dbReference type="GeneTree" id="ENSGT00940000166130"/>
<dbReference type="HOGENOM" id="CLU_555838_0_0_1"/>
<dbReference type="InParanoid" id="Q9VSH2"/>
<dbReference type="OMA" id="LIMMATD"/>
<dbReference type="OrthoDB" id="6478931at2759"/>
<dbReference type="PhylomeDB" id="Q9VSH2"/>
<dbReference type="SignaLink" id="Q9VSH2"/>
<dbReference type="BioGRID-ORCS" id="38935">
    <property type="hits" value="0 hits in 1 CRISPR screen"/>
</dbReference>
<dbReference type="GenomeRNAi" id="38935"/>
<dbReference type="PRO" id="PR:Q9VSH2"/>
<dbReference type="Proteomes" id="UP000000803">
    <property type="component" value="Chromosome 3L"/>
</dbReference>
<dbReference type="Bgee" id="FBgn0035870">
    <property type="expression patterns" value="Expressed in gustatory receptor neuron (Drosophila) and 3 other cell types or tissues"/>
</dbReference>
<dbReference type="ExpressionAtlas" id="Q9VSH2">
    <property type="expression patterns" value="baseline and differential"/>
</dbReference>
<dbReference type="GO" id="GO:0030424">
    <property type="term" value="C:axon"/>
    <property type="evidence" value="ECO:0000314"/>
    <property type="project" value="FlyBase"/>
</dbReference>
<dbReference type="GO" id="GO:0030425">
    <property type="term" value="C:dendrite"/>
    <property type="evidence" value="ECO:0000314"/>
    <property type="project" value="FlyBase"/>
</dbReference>
<dbReference type="GO" id="GO:0016020">
    <property type="term" value="C:membrane"/>
    <property type="evidence" value="ECO:0000303"/>
    <property type="project" value="UniProtKB"/>
</dbReference>
<dbReference type="GO" id="GO:0043025">
    <property type="term" value="C:neuronal cell body"/>
    <property type="evidence" value="ECO:0000318"/>
    <property type="project" value="GO_Central"/>
</dbReference>
<dbReference type="GO" id="GO:0005886">
    <property type="term" value="C:plasma membrane"/>
    <property type="evidence" value="ECO:0000250"/>
    <property type="project" value="FlyBase"/>
</dbReference>
<dbReference type="GO" id="GO:0170021">
    <property type="term" value="F:ionotropic taste receptor activity"/>
    <property type="evidence" value="ECO:0000315"/>
    <property type="project" value="FlyBase"/>
</dbReference>
<dbReference type="GO" id="GO:0015276">
    <property type="term" value="F:ligand-gated monoatomic ion channel activity"/>
    <property type="evidence" value="ECO:0000250"/>
    <property type="project" value="FlyBase"/>
</dbReference>
<dbReference type="GO" id="GO:0008527">
    <property type="term" value="F:taste receptor activity"/>
    <property type="evidence" value="ECO:0000303"/>
    <property type="project" value="UniProtKB"/>
</dbReference>
<dbReference type="GO" id="GO:0007635">
    <property type="term" value="P:chemosensory behavior"/>
    <property type="evidence" value="ECO:0000315"/>
    <property type="project" value="FlyBase"/>
</dbReference>
<dbReference type="GO" id="GO:0001580">
    <property type="term" value="P:detection of chemical stimulus involved in sensory perception of bitter taste"/>
    <property type="evidence" value="ECO:0000315"/>
    <property type="project" value="FlyBase"/>
</dbReference>
<dbReference type="GO" id="GO:0050912">
    <property type="term" value="P:detection of chemical stimulus involved in sensory perception of taste"/>
    <property type="evidence" value="ECO:0000303"/>
    <property type="project" value="UniProtKB"/>
</dbReference>
<dbReference type="GO" id="GO:0008049">
    <property type="term" value="P:male courtship behavior"/>
    <property type="evidence" value="ECO:0000318"/>
    <property type="project" value="GO_Central"/>
</dbReference>
<dbReference type="GO" id="GO:0034220">
    <property type="term" value="P:monoatomic ion transmembrane transport"/>
    <property type="evidence" value="ECO:0000250"/>
    <property type="project" value="FlyBase"/>
</dbReference>
<dbReference type="GO" id="GO:0031000">
    <property type="term" value="P:response to caffeine"/>
    <property type="evidence" value="ECO:0000315"/>
    <property type="project" value="FlyBase"/>
</dbReference>
<dbReference type="GO" id="GO:0017085">
    <property type="term" value="P:response to insecticide"/>
    <property type="evidence" value="ECO:0000315"/>
    <property type="project" value="FlyBase"/>
</dbReference>
<dbReference type="GO" id="GO:1901354">
    <property type="term" value="P:response to L-canavanine"/>
    <property type="evidence" value="ECO:0000315"/>
    <property type="project" value="FlyBase"/>
</dbReference>
<dbReference type="GO" id="GO:0009636">
    <property type="term" value="P:response to toxic substance"/>
    <property type="evidence" value="ECO:0000315"/>
    <property type="project" value="FlyBase"/>
</dbReference>
<dbReference type="GO" id="GO:0050913">
    <property type="term" value="P:sensory perception of bitter taste"/>
    <property type="evidence" value="ECO:0000315"/>
    <property type="project" value="FlyBase"/>
</dbReference>
<dbReference type="GO" id="GO:0050909">
    <property type="term" value="P:sensory perception of taste"/>
    <property type="evidence" value="ECO:0000303"/>
    <property type="project" value="FlyBase"/>
</dbReference>
<dbReference type="GO" id="GO:0007165">
    <property type="term" value="P:signal transduction"/>
    <property type="evidence" value="ECO:0007669"/>
    <property type="project" value="UniProtKB-KW"/>
</dbReference>
<dbReference type="InterPro" id="IPR013604">
    <property type="entry name" value="7TM_chemorcpt"/>
</dbReference>
<dbReference type="PANTHER" id="PTHR21143:SF128">
    <property type="entry name" value="GUSTATORY RECEPTOR FOR BITTER TASTE 66A"/>
    <property type="match status" value="1"/>
</dbReference>
<dbReference type="PANTHER" id="PTHR21143">
    <property type="entry name" value="INVERTEBRATE GUSTATORY RECEPTOR"/>
    <property type="match status" value="1"/>
</dbReference>
<dbReference type="Pfam" id="PF08395">
    <property type="entry name" value="7tm_7"/>
    <property type="match status" value="2"/>
</dbReference>
<proteinExistence type="evidence at transcript level"/>
<accession>Q9VSH2</accession>
<evidence type="ECO:0000250" key="1"/>
<evidence type="ECO:0000255" key="2"/>
<evidence type="ECO:0000269" key="3">
    <source>
    </source>
</evidence>
<evidence type="ECO:0000269" key="4">
    <source>
    </source>
</evidence>
<evidence type="ECO:0000269" key="5">
    <source>
    </source>
</evidence>
<evidence type="ECO:0000269" key="6">
    <source>
    </source>
</evidence>
<evidence type="ECO:0000269" key="7">
    <source>
    </source>
</evidence>
<evidence type="ECO:0000269" key="8">
    <source>
    </source>
</evidence>
<evidence type="ECO:0000269" key="9">
    <source>
    </source>
</evidence>
<evidence type="ECO:0000269" key="10">
    <source>
    </source>
</evidence>
<evidence type="ECO:0000269" key="11">
    <source>
    </source>
</evidence>
<evidence type="ECO:0000269" key="12">
    <source>
    </source>
</evidence>
<evidence type="ECO:0000305" key="13"/>
<sequence>MAQAEDAVQPLLQQFQQLFFISKIAGILPQDLEKFRSRNLLEKSRNGMIYMLSTLILYVVLYNILIYSFGEEDRSLKASQSTLTFVIGLFLTYIGLIMMVSDQLTALRNQGRIGELYERIRLVDERLYKEGCVMDNSTIGRRIRIMLIMTVIFELSILVSTYVKLVDYSQWMSLLWIVSAIPTFINTLDKIWFAVSLYALKERFEAINATLEELVDTHEKHKLWLRGNQEVPPPLDSSQPPQYDSNLEYLYKELGGMDIGSIGKSSVSGSGKNKVAPVAHSMNSFGEAIDAASRKPPPPPLATNMVHESELGNAAKVEEKLNNLCQVHDEICEIGKALNELWSYPILSLMAYGFLIFTAQLYFLYCATQYQSIPSLFRSAKNPFITVIVLSYTSGKCVYLIYLSWKTSQASKRTGISLHKCGVVADDNLLYEIVNHLSLKLLNHSVDFSACGFFTLDMETLYGVSGGITSYLIILIQFNLAAQQAKEAIQTFNSLNDTAGLVGAATDMDNISSTLRDFVTTTMTPAV</sequence>
<gene>
    <name type="primary">Gr66a</name>
    <name type="ORF">CG7189</name>
</gene>
<organism>
    <name type="scientific">Drosophila melanogaster</name>
    <name type="common">Fruit fly</name>
    <dbReference type="NCBI Taxonomy" id="7227"/>
    <lineage>
        <taxon>Eukaryota</taxon>
        <taxon>Metazoa</taxon>
        <taxon>Ecdysozoa</taxon>
        <taxon>Arthropoda</taxon>
        <taxon>Hexapoda</taxon>
        <taxon>Insecta</taxon>
        <taxon>Pterygota</taxon>
        <taxon>Neoptera</taxon>
        <taxon>Endopterygota</taxon>
        <taxon>Diptera</taxon>
        <taxon>Brachycera</taxon>
        <taxon>Muscomorpha</taxon>
        <taxon>Ephydroidea</taxon>
        <taxon>Drosophilidae</taxon>
        <taxon>Drosophila</taxon>
        <taxon>Sophophora</taxon>
    </lineage>
</organism>
<feature type="chain" id="PRO_0000216535" description="Gustatory receptor for bitter taste 66a">
    <location>
        <begin position="1"/>
        <end position="527"/>
    </location>
</feature>
<feature type="topological domain" description="Cytoplasmic" evidence="1">
    <location>
        <begin position="1"/>
        <end position="46"/>
    </location>
</feature>
<feature type="transmembrane region" description="Helical; Name=1" evidence="2">
    <location>
        <begin position="47"/>
        <end position="67"/>
    </location>
</feature>
<feature type="topological domain" description="Extracellular" evidence="1">
    <location>
        <begin position="68"/>
        <end position="80"/>
    </location>
</feature>
<feature type="transmembrane region" description="Helical; Name=2" evidence="2">
    <location>
        <begin position="81"/>
        <end position="101"/>
    </location>
</feature>
<feature type="topological domain" description="Cytoplasmic" evidence="1">
    <location>
        <begin position="102"/>
        <end position="144"/>
    </location>
</feature>
<feature type="transmembrane region" description="Helical; Name=3" evidence="2">
    <location>
        <begin position="145"/>
        <end position="165"/>
    </location>
</feature>
<feature type="topological domain" description="Extracellular" evidence="1">
    <location>
        <begin position="166"/>
        <end position="174"/>
    </location>
</feature>
<feature type="transmembrane region" description="Helical; Name=4" evidence="2">
    <location>
        <begin position="175"/>
        <end position="195"/>
    </location>
</feature>
<feature type="topological domain" description="Cytoplasmic" evidence="1">
    <location>
        <begin position="196"/>
        <end position="345"/>
    </location>
</feature>
<feature type="transmembrane region" description="Helical; Name=5" evidence="2">
    <location>
        <begin position="346"/>
        <end position="366"/>
    </location>
</feature>
<feature type="topological domain" description="Extracellular" evidence="1">
    <location>
        <begin position="367"/>
        <end position="382"/>
    </location>
</feature>
<feature type="transmembrane region" description="Helical; Name=6" evidence="2">
    <location>
        <begin position="383"/>
        <end position="403"/>
    </location>
</feature>
<feature type="topological domain" description="Cytoplasmic" evidence="1">
    <location>
        <begin position="404"/>
        <end position="460"/>
    </location>
</feature>
<feature type="transmembrane region" description="Helical; Name=7" evidence="2">
    <location>
        <begin position="461"/>
        <end position="481"/>
    </location>
</feature>
<feature type="topological domain" description="Extracellular" evidence="1">
    <location>
        <begin position="482"/>
        <end position="527"/>
    </location>
</feature>
<feature type="glycosylation site" description="N-linked (GlcNAc...) asparagine" evidence="2">
    <location>
        <position position="496"/>
    </location>
</feature>
<feature type="glycosylation site" description="N-linked (GlcNAc...) asparagine" evidence="2">
    <location>
        <position position="510"/>
    </location>
</feature>
<reference key="1">
    <citation type="journal article" date="2000" name="Science">
        <title>The genome sequence of Drosophila melanogaster.</title>
        <authorList>
            <person name="Adams M.D."/>
            <person name="Celniker S.E."/>
            <person name="Holt R.A."/>
            <person name="Evans C.A."/>
            <person name="Gocayne J.D."/>
            <person name="Amanatides P.G."/>
            <person name="Scherer S.E."/>
            <person name="Li P.W."/>
            <person name="Hoskins R.A."/>
            <person name="Galle R.F."/>
            <person name="George R.A."/>
            <person name="Lewis S.E."/>
            <person name="Richards S."/>
            <person name="Ashburner M."/>
            <person name="Henderson S.N."/>
            <person name="Sutton G.G."/>
            <person name="Wortman J.R."/>
            <person name="Yandell M.D."/>
            <person name="Zhang Q."/>
            <person name="Chen L.X."/>
            <person name="Brandon R.C."/>
            <person name="Rogers Y.-H.C."/>
            <person name="Blazej R.G."/>
            <person name="Champe M."/>
            <person name="Pfeiffer B.D."/>
            <person name="Wan K.H."/>
            <person name="Doyle C."/>
            <person name="Baxter E.G."/>
            <person name="Helt G."/>
            <person name="Nelson C.R."/>
            <person name="Miklos G.L.G."/>
            <person name="Abril J.F."/>
            <person name="Agbayani A."/>
            <person name="An H.-J."/>
            <person name="Andrews-Pfannkoch C."/>
            <person name="Baldwin D."/>
            <person name="Ballew R.M."/>
            <person name="Basu A."/>
            <person name="Baxendale J."/>
            <person name="Bayraktaroglu L."/>
            <person name="Beasley E.M."/>
            <person name="Beeson K.Y."/>
            <person name="Benos P.V."/>
            <person name="Berman B.P."/>
            <person name="Bhandari D."/>
            <person name="Bolshakov S."/>
            <person name="Borkova D."/>
            <person name="Botchan M.R."/>
            <person name="Bouck J."/>
            <person name="Brokstein P."/>
            <person name="Brottier P."/>
            <person name="Burtis K.C."/>
            <person name="Busam D.A."/>
            <person name="Butler H."/>
            <person name="Cadieu E."/>
            <person name="Center A."/>
            <person name="Chandra I."/>
            <person name="Cherry J.M."/>
            <person name="Cawley S."/>
            <person name="Dahlke C."/>
            <person name="Davenport L.B."/>
            <person name="Davies P."/>
            <person name="de Pablos B."/>
            <person name="Delcher A."/>
            <person name="Deng Z."/>
            <person name="Mays A.D."/>
            <person name="Dew I."/>
            <person name="Dietz S.M."/>
            <person name="Dodson K."/>
            <person name="Doup L.E."/>
            <person name="Downes M."/>
            <person name="Dugan-Rocha S."/>
            <person name="Dunkov B.C."/>
            <person name="Dunn P."/>
            <person name="Durbin K.J."/>
            <person name="Evangelista C.C."/>
            <person name="Ferraz C."/>
            <person name="Ferriera S."/>
            <person name="Fleischmann W."/>
            <person name="Fosler C."/>
            <person name="Gabrielian A.E."/>
            <person name="Garg N.S."/>
            <person name="Gelbart W.M."/>
            <person name="Glasser K."/>
            <person name="Glodek A."/>
            <person name="Gong F."/>
            <person name="Gorrell J.H."/>
            <person name="Gu Z."/>
            <person name="Guan P."/>
            <person name="Harris M."/>
            <person name="Harris N.L."/>
            <person name="Harvey D.A."/>
            <person name="Heiman T.J."/>
            <person name="Hernandez J.R."/>
            <person name="Houck J."/>
            <person name="Hostin D."/>
            <person name="Houston K.A."/>
            <person name="Howland T.J."/>
            <person name="Wei M.-H."/>
            <person name="Ibegwam C."/>
            <person name="Jalali M."/>
            <person name="Kalush F."/>
            <person name="Karpen G.H."/>
            <person name="Ke Z."/>
            <person name="Kennison J.A."/>
            <person name="Ketchum K.A."/>
            <person name="Kimmel B.E."/>
            <person name="Kodira C.D."/>
            <person name="Kraft C.L."/>
            <person name="Kravitz S."/>
            <person name="Kulp D."/>
            <person name="Lai Z."/>
            <person name="Lasko P."/>
            <person name="Lei Y."/>
            <person name="Levitsky A.A."/>
            <person name="Li J.H."/>
            <person name="Li Z."/>
            <person name="Liang Y."/>
            <person name="Lin X."/>
            <person name="Liu X."/>
            <person name="Mattei B."/>
            <person name="McIntosh T.C."/>
            <person name="McLeod M.P."/>
            <person name="McPherson D."/>
            <person name="Merkulov G."/>
            <person name="Milshina N.V."/>
            <person name="Mobarry C."/>
            <person name="Morris J."/>
            <person name="Moshrefi A."/>
            <person name="Mount S.M."/>
            <person name="Moy M."/>
            <person name="Murphy B."/>
            <person name="Murphy L."/>
            <person name="Muzny D.M."/>
            <person name="Nelson D.L."/>
            <person name="Nelson D.R."/>
            <person name="Nelson K.A."/>
            <person name="Nixon K."/>
            <person name="Nusskern D.R."/>
            <person name="Pacleb J.M."/>
            <person name="Palazzolo M."/>
            <person name="Pittman G.S."/>
            <person name="Pan S."/>
            <person name="Pollard J."/>
            <person name="Puri V."/>
            <person name="Reese M.G."/>
            <person name="Reinert K."/>
            <person name="Remington K."/>
            <person name="Saunders R.D.C."/>
            <person name="Scheeler F."/>
            <person name="Shen H."/>
            <person name="Shue B.C."/>
            <person name="Siden-Kiamos I."/>
            <person name="Simpson M."/>
            <person name="Skupski M.P."/>
            <person name="Smith T.J."/>
            <person name="Spier E."/>
            <person name="Spradling A.C."/>
            <person name="Stapleton M."/>
            <person name="Strong R."/>
            <person name="Sun E."/>
            <person name="Svirskas R."/>
            <person name="Tector C."/>
            <person name="Turner R."/>
            <person name="Venter E."/>
            <person name="Wang A.H."/>
            <person name="Wang X."/>
            <person name="Wang Z.-Y."/>
            <person name="Wassarman D.A."/>
            <person name="Weinstock G.M."/>
            <person name="Weissenbach J."/>
            <person name="Williams S.M."/>
            <person name="Woodage T."/>
            <person name="Worley K.C."/>
            <person name="Wu D."/>
            <person name="Yang S."/>
            <person name="Yao Q.A."/>
            <person name="Ye J."/>
            <person name="Yeh R.-F."/>
            <person name="Zaveri J.S."/>
            <person name="Zhan M."/>
            <person name="Zhang G."/>
            <person name="Zhao Q."/>
            <person name="Zheng L."/>
            <person name="Zheng X.H."/>
            <person name="Zhong F.N."/>
            <person name="Zhong W."/>
            <person name="Zhou X."/>
            <person name="Zhu S.C."/>
            <person name="Zhu X."/>
            <person name="Smith H.O."/>
            <person name="Gibbs R.A."/>
            <person name="Myers E.W."/>
            <person name="Rubin G.M."/>
            <person name="Venter J.C."/>
        </authorList>
    </citation>
    <scope>NUCLEOTIDE SEQUENCE [LARGE SCALE GENOMIC DNA]</scope>
    <source>
        <strain>Berkeley</strain>
    </source>
</reference>
<reference key="2">
    <citation type="journal article" date="2002" name="Genome Biol.">
        <title>Annotation of the Drosophila melanogaster euchromatic genome: a systematic review.</title>
        <authorList>
            <person name="Misra S."/>
            <person name="Crosby M.A."/>
            <person name="Mungall C.J."/>
            <person name="Matthews B.B."/>
            <person name="Campbell K.S."/>
            <person name="Hradecky P."/>
            <person name="Huang Y."/>
            <person name="Kaminker J.S."/>
            <person name="Millburn G.H."/>
            <person name="Prochnik S.E."/>
            <person name="Smith C.D."/>
            <person name="Tupy J.L."/>
            <person name="Whitfield E.J."/>
            <person name="Bayraktaroglu L."/>
            <person name="Berman B.P."/>
            <person name="Bettencourt B.R."/>
            <person name="Celniker S.E."/>
            <person name="de Grey A.D.N.J."/>
            <person name="Drysdale R.A."/>
            <person name="Harris N.L."/>
            <person name="Richter J."/>
            <person name="Russo S."/>
            <person name="Schroeder A.J."/>
            <person name="Shu S.Q."/>
            <person name="Stapleton M."/>
            <person name="Yamada C."/>
            <person name="Ashburner M."/>
            <person name="Gelbart W.M."/>
            <person name="Rubin G.M."/>
            <person name="Lewis S.E."/>
        </authorList>
    </citation>
    <scope>GENOME REANNOTATION</scope>
    <source>
        <strain>Berkeley</strain>
    </source>
</reference>
<reference key="3">
    <citation type="journal article" date="2001" name="Curr. Biol.">
        <title>Spatially restricted expression of candidate taste receptors in the Drosophila gustatory system.</title>
        <authorList>
            <person name="Dunipace L."/>
            <person name="Meister S."/>
            <person name="McNealy C."/>
            <person name="Amrein H."/>
        </authorList>
    </citation>
    <scope>IDENTIFICATION</scope>
    <scope>TISSUE SPECIFICITY</scope>
</reference>
<reference key="4">
    <citation type="journal article" date="2004" name="Curr. Biol.">
        <title>Taste perception and coding in Drosophila.</title>
        <authorList>
            <person name="Thorne N."/>
            <person name="Chromey C."/>
            <person name="Bray S."/>
            <person name="Amrein H."/>
        </authorList>
    </citation>
    <scope>TISSUE SPECIFICITY</scope>
    <scope>FUNCTION</scope>
</reference>
<reference key="5">
    <citation type="journal article" date="2006" name="Curr. Biol.">
        <title>A taste receptor required for the caffeine response in vivo.</title>
        <authorList>
            <person name="Moon S.J."/>
            <person name="Kottgen M."/>
            <person name="Jiao Y."/>
            <person name="Xu H."/>
            <person name="Montell C."/>
        </authorList>
    </citation>
    <scope>FUNCTION</scope>
    <scope>DISRUPTION PHENOTYPE</scope>
    <scope>TISSUE SPECIFICITY</scope>
</reference>
<reference key="6">
    <citation type="journal article" date="2006" name="Neuron">
        <title>Imaging taste responses in the fly brain reveals a functional map of taste category and behavior.</title>
        <authorList>
            <person name="Marella S."/>
            <person name="Fischler W."/>
            <person name="Kong P."/>
            <person name="Asgarian S."/>
            <person name="Rueckert E."/>
            <person name="Scott K."/>
        </authorList>
    </citation>
    <scope>FUNCTION</scope>
    <scope>TISSUE SPECIFICITY</scope>
</reference>
<reference key="7">
    <citation type="journal article" date="2009" name="Behav. Genet.">
        <title>Feminization and alteration of Drosophila taste neurons induce reciprocal effects on male avoidance behavior.</title>
        <authorList>
            <person name="Lacaille F."/>
            <person name="Everaerts C."/>
            <person name="Ferveur J.F."/>
        </authorList>
    </citation>
    <scope>FUNCTION</scope>
</reference>
<reference key="8">
    <citation type="journal article" date="2009" name="Proc. Natl. Acad. Sci. U.S.A.">
        <title>Multiple gustatory receptors required for the caffeine response in Drosophila.</title>
        <authorList>
            <person name="Lee Y."/>
            <person name="Moon S.J."/>
            <person name="Montell C."/>
        </authorList>
    </citation>
    <scope>FUNCTION</scope>
    <scope>DISRUPTION PHENOTYPE</scope>
</reference>
<reference key="9">
    <citation type="journal article" date="2010" name="Neuron">
        <title>Avoiding DEET through insect gustatory receptors.</title>
        <authorList>
            <person name="Lee Y."/>
            <person name="Kim S.H."/>
            <person name="Montell C."/>
        </authorList>
    </citation>
    <scope>FUNCTION</scope>
    <scope>DISRUPTION PHENOTYPE</scope>
</reference>
<reference key="10">
    <citation type="journal article" date="2011" name="J. Neurosci.">
        <title>Molecular and cellular organization of the taste system in the Drosophila larva.</title>
        <authorList>
            <person name="Kwon J.Y."/>
            <person name="Dahanukar A."/>
            <person name="Weiss L.A."/>
            <person name="Carlson J.R."/>
        </authorList>
    </citation>
    <scope>TISSUE SPECIFICITY</scope>
</reference>
<reference key="11">
    <citation type="journal article" date="2012" name="Genetics">
        <title>Tissue-specific activation of a single gustatory receptor produces opposing behavioral responses in Drosophila.</title>
        <authorList>
            <person name="Joseph R.M."/>
            <person name="Heberlein U."/>
        </authorList>
    </citation>
    <scope>FUNCTION</scope>
</reference>
<reference key="12">
    <citation type="journal article" date="2012" name="J. Neurosci.">
        <title>Gustatory receptors required for avoiding the insecticide L-canavanine.</title>
        <authorList>
            <person name="Lee Y."/>
            <person name="Kang M.J."/>
            <person name="Shim J."/>
            <person name="Cheong C.U."/>
            <person name="Moon S.J."/>
            <person name="Montell C."/>
        </authorList>
    </citation>
    <scope>FUNCTION</scope>
    <scope>DISRUPTION PHENOTYPE</scope>
</reference>